<name>RF1_BURMA</name>
<evidence type="ECO:0000255" key="1">
    <source>
        <dbReference type="HAMAP-Rule" id="MF_00093"/>
    </source>
</evidence>
<sequence>MKTSMQSKLDQLTTRLAELNDLLSRENVTADLDQYRKLTREHAEIGPVVEHYAQWRQARADELAAQELLADASMRDFAEDELRGARDRMGRLAAELQTMLLPKDPNDERNIFVEIRAGTGGDESALFAGNLLRMYLRYAERQRWQVEMMSESPSDLGGYKEVIVRIAGYGAYSRLKFESGGHRVQRVPATETQGRIHTSACTVAVMPEADEIGEVEINPADLRIDTFRASGAGGQHINKTDSAVRVTHIPTGIVVECQDDRSQHKNKDRALKVLAARIKDKQYHEQHAKEAATRKSLIGSGDRSERIRTYNFPQGRMTDHRINLTLYKLEQIMDGDLDELIAALVSEHQAELLASLGDAE</sequence>
<reference key="1">
    <citation type="journal article" date="2004" name="Proc. Natl. Acad. Sci. U.S.A.">
        <title>Structural flexibility in the Burkholderia mallei genome.</title>
        <authorList>
            <person name="Nierman W.C."/>
            <person name="DeShazer D."/>
            <person name="Kim H.S."/>
            <person name="Tettelin H."/>
            <person name="Nelson K.E."/>
            <person name="Feldblyum T.V."/>
            <person name="Ulrich R.L."/>
            <person name="Ronning C.M."/>
            <person name="Brinkac L.M."/>
            <person name="Daugherty S.C."/>
            <person name="Davidsen T.D."/>
            <person name="DeBoy R.T."/>
            <person name="Dimitrov G."/>
            <person name="Dodson R.J."/>
            <person name="Durkin A.S."/>
            <person name="Gwinn M.L."/>
            <person name="Haft D.H."/>
            <person name="Khouri H.M."/>
            <person name="Kolonay J.F."/>
            <person name="Madupu R."/>
            <person name="Mohammoud Y."/>
            <person name="Nelson W.C."/>
            <person name="Radune D."/>
            <person name="Romero C.M."/>
            <person name="Sarria S."/>
            <person name="Selengut J."/>
            <person name="Shamblin C."/>
            <person name="Sullivan S.A."/>
            <person name="White O."/>
            <person name="Yu Y."/>
            <person name="Zafar N."/>
            <person name="Zhou L."/>
            <person name="Fraser C.M."/>
        </authorList>
    </citation>
    <scope>NUCLEOTIDE SEQUENCE [LARGE SCALE GENOMIC DNA]</scope>
    <source>
        <strain>ATCC 23344</strain>
    </source>
</reference>
<comment type="function">
    <text evidence="1">Peptide chain release factor 1 directs the termination of translation in response to the peptide chain termination codons UAG and UAA.</text>
</comment>
<comment type="subcellular location">
    <subcellularLocation>
        <location evidence="1">Cytoplasm</location>
    </subcellularLocation>
</comment>
<comment type="PTM">
    <text evidence="1">Methylated by PrmC. Methylation increases the termination efficiency of RF1.</text>
</comment>
<comment type="similarity">
    <text evidence="1">Belongs to the prokaryotic/mitochondrial release factor family.</text>
</comment>
<proteinExistence type="inferred from homology"/>
<accession>Q62DF3</accession>
<protein>
    <recommendedName>
        <fullName evidence="1">Peptide chain release factor 1</fullName>
        <shortName evidence="1">RF-1</shortName>
    </recommendedName>
</protein>
<gene>
    <name evidence="1" type="primary">prfA</name>
    <name type="ordered locus">BMAA0504</name>
</gene>
<dbReference type="EMBL" id="CP000011">
    <property type="protein sequence ID" value="AAU46610.1"/>
    <property type="molecule type" value="Genomic_DNA"/>
</dbReference>
<dbReference type="RefSeq" id="WP_004186862.1">
    <property type="nucleotide sequence ID" value="NC_006349.2"/>
</dbReference>
<dbReference type="RefSeq" id="YP_105275.1">
    <property type="nucleotide sequence ID" value="NC_006349.2"/>
</dbReference>
<dbReference type="SMR" id="Q62DF3"/>
<dbReference type="GeneID" id="92976802"/>
<dbReference type="KEGG" id="bma:BMAA0504"/>
<dbReference type="PATRIC" id="fig|243160.12.peg.4011"/>
<dbReference type="eggNOG" id="COG0216">
    <property type="taxonomic scope" value="Bacteria"/>
</dbReference>
<dbReference type="HOGENOM" id="CLU_036856_0_1_4"/>
<dbReference type="Proteomes" id="UP000006693">
    <property type="component" value="Chromosome 2"/>
</dbReference>
<dbReference type="GO" id="GO:0005737">
    <property type="term" value="C:cytoplasm"/>
    <property type="evidence" value="ECO:0007669"/>
    <property type="project" value="UniProtKB-SubCell"/>
</dbReference>
<dbReference type="GO" id="GO:0016149">
    <property type="term" value="F:translation release factor activity, codon specific"/>
    <property type="evidence" value="ECO:0007669"/>
    <property type="project" value="UniProtKB-UniRule"/>
</dbReference>
<dbReference type="FunFam" id="3.30.160.20:FF:000004">
    <property type="entry name" value="Peptide chain release factor 1"/>
    <property type="match status" value="1"/>
</dbReference>
<dbReference type="FunFam" id="3.30.70.1660:FF:000002">
    <property type="entry name" value="Peptide chain release factor 1"/>
    <property type="match status" value="1"/>
</dbReference>
<dbReference type="FunFam" id="3.30.70.1660:FF:000004">
    <property type="entry name" value="Peptide chain release factor 1"/>
    <property type="match status" value="1"/>
</dbReference>
<dbReference type="Gene3D" id="3.30.160.20">
    <property type="match status" value="1"/>
</dbReference>
<dbReference type="Gene3D" id="3.30.70.1660">
    <property type="match status" value="1"/>
</dbReference>
<dbReference type="Gene3D" id="6.10.140.1950">
    <property type="match status" value="1"/>
</dbReference>
<dbReference type="HAMAP" id="MF_00093">
    <property type="entry name" value="Rel_fac_1"/>
    <property type="match status" value="1"/>
</dbReference>
<dbReference type="InterPro" id="IPR005139">
    <property type="entry name" value="PCRF"/>
</dbReference>
<dbReference type="InterPro" id="IPR000352">
    <property type="entry name" value="Pep_chain_release_fac_I"/>
</dbReference>
<dbReference type="InterPro" id="IPR045853">
    <property type="entry name" value="Pep_chain_release_fac_I_sf"/>
</dbReference>
<dbReference type="InterPro" id="IPR050057">
    <property type="entry name" value="Prokaryotic/Mito_RF"/>
</dbReference>
<dbReference type="InterPro" id="IPR004373">
    <property type="entry name" value="RF-1"/>
</dbReference>
<dbReference type="NCBIfam" id="TIGR00019">
    <property type="entry name" value="prfA"/>
    <property type="match status" value="1"/>
</dbReference>
<dbReference type="NCBIfam" id="NF001859">
    <property type="entry name" value="PRK00591.1"/>
    <property type="match status" value="1"/>
</dbReference>
<dbReference type="PANTHER" id="PTHR43804">
    <property type="entry name" value="LD18447P"/>
    <property type="match status" value="1"/>
</dbReference>
<dbReference type="PANTHER" id="PTHR43804:SF7">
    <property type="entry name" value="LD18447P"/>
    <property type="match status" value="1"/>
</dbReference>
<dbReference type="Pfam" id="PF03462">
    <property type="entry name" value="PCRF"/>
    <property type="match status" value="1"/>
</dbReference>
<dbReference type="Pfam" id="PF00472">
    <property type="entry name" value="RF-1"/>
    <property type="match status" value="1"/>
</dbReference>
<dbReference type="SMART" id="SM00937">
    <property type="entry name" value="PCRF"/>
    <property type="match status" value="1"/>
</dbReference>
<dbReference type="SUPFAM" id="SSF75620">
    <property type="entry name" value="Release factor"/>
    <property type="match status" value="1"/>
</dbReference>
<dbReference type="PROSITE" id="PS00745">
    <property type="entry name" value="RF_PROK_I"/>
    <property type="match status" value="1"/>
</dbReference>
<feature type="chain" id="PRO_0000177649" description="Peptide chain release factor 1">
    <location>
        <begin position="1"/>
        <end position="360"/>
    </location>
</feature>
<feature type="modified residue" description="N5-methylglutamine" evidence="1">
    <location>
        <position position="235"/>
    </location>
</feature>
<keyword id="KW-0963">Cytoplasm</keyword>
<keyword id="KW-0488">Methylation</keyword>
<keyword id="KW-0648">Protein biosynthesis</keyword>
<keyword id="KW-1185">Reference proteome</keyword>
<organism>
    <name type="scientific">Burkholderia mallei (strain ATCC 23344)</name>
    <dbReference type="NCBI Taxonomy" id="243160"/>
    <lineage>
        <taxon>Bacteria</taxon>
        <taxon>Pseudomonadati</taxon>
        <taxon>Pseudomonadota</taxon>
        <taxon>Betaproteobacteria</taxon>
        <taxon>Burkholderiales</taxon>
        <taxon>Burkholderiaceae</taxon>
        <taxon>Burkholderia</taxon>
        <taxon>pseudomallei group</taxon>
    </lineage>
</organism>